<comment type="function">
    <text evidence="1">Essential cell division protein that stabilizes the FtsZ protofilaments by cross-linking them and that serves as a cytoplasmic membrane anchor for the Z ring. Also required for the recruitment to the septal ring of downstream cell division proteins.</text>
</comment>
<comment type="subunit">
    <text evidence="1">Interacts with FtsZ via their C-terminal domains.</text>
</comment>
<comment type="subcellular location">
    <subcellularLocation>
        <location evidence="1">Cell inner membrane</location>
        <topology evidence="1">Single-pass type I membrane protein</topology>
    </subcellularLocation>
    <text evidence="1">Localizes to the Z ring in an FtsZ-dependent manner.</text>
</comment>
<comment type="similarity">
    <text evidence="1">Belongs to the ZipA family.</text>
</comment>
<comment type="sequence caution" evidence="3">
    <conflict type="erroneous initiation">
        <sequence resource="EMBL-CDS" id="AAX66332"/>
    </conflict>
</comment>
<feature type="chain" id="PRO_0000237133" description="Cell division protein ZipA">
    <location>
        <begin position="1"/>
        <end position="328"/>
    </location>
</feature>
<feature type="topological domain" description="Periplasmic" evidence="1">
    <location>
        <begin position="1"/>
        <end position="6"/>
    </location>
</feature>
<feature type="transmembrane region" description="Helical" evidence="1">
    <location>
        <begin position="7"/>
        <end position="27"/>
    </location>
</feature>
<feature type="topological domain" description="Cytoplasmic" evidence="1">
    <location>
        <begin position="28"/>
        <end position="328"/>
    </location>
</feature>
<feature type="region of interest" description="Disordered" evidence="2">
    <location>
        <begin position="42"/>
        <end position="171"/>
    </location>
</feature>
<feature type="compositionally biased region" description="Acidic residues" evidence="2">
    <location>
        <begin position="51"/>
        <end position="63"/>
    </location>
</feature>
<feature type="compositionally biased region" description="Low complexity" evidence="2">
    <location>
        <begin position="85"/>
        <end position="102"/>
    </location>
</feature>
<feature type="compositionally biased region" description="Low complexity" evidence="2">
    <location>
        <begin position="111"/>
        <end position="132"/>
    </location>
</feature>
<feature type="compositionally biased region" description="Pro residues" evidence="2">
    <location>
        <begin position="133"/>
        <end position="162"/>
    </location>
</feature>
<keyword id="KW-0131">Cell cycle</keyword>
<keyword id="KW-0132">Cell division</keyword>
<keyword id="KW-0997">Cell inner membrane</keyword>
<keyword id="KW-1003">Cell membrane</keyword>
<keyword id="KW-0472">Membrane</keyword>
<keyword id="KW-0812">Transmembrane</keyword>
<keyword id="KW-1133">Transmembrane helix</keyword>
<proteinExistence type="inferred from homology"/>
<gene>
    <name evidence="1" type="primary">zipA</name>
    <name type="ordered locus">SCH_2426</name>
</gene>
<organism>
    <name type="scientific">Salmonella choleraesuis (strain SC-B67)</name>
    <dbReference type="NCBI Taxonomy" id="321314"/>
    <lineage>
        <taxon>Bacteria</taxon>
        <taxon>Pseudomonadati</taxon>
        <taxon>Pseudomonadota</taxon>
        <taxon>Gammaproteobacteria</taxon>
        <taxon>Enterobacterales</taxon>
        <taxon>Enterobacteriaceae</taxon>
        <taxon>Salmonella</taxon>
    </lineage>
</organism>
<protein>
    <recommendedName>
        <fullName evidence="1">Cell division protein ZipA</fullName>
    </recommendedName>
</protein>
<evidence type="ECO:0000255" key="1">
    <source>
        <dbReference type="HAMAP-Rule" id="MF_00509"/>
    </source>
</evidence>
<evidence type="ECO:0000256" key="2">
    <source>
        <dbReference type="SAM" id="MobiDB-lite"/>
    </source>
</evidence>
<evidence type="ECO:0000305" key="3"/>
<accession>Q57LT0</accession>
<sequence length="328" mass="36332">MMQDLRLILIIVGAIAIIALLVHGFWTSRKERSSMFRDRPLKRMKSKRDDDSYDDDVEEDEGVGEVRVHRVNHAPGQSQEHDAPRQSPQHQYQPPYASAQPRPAAPPQPQAPMQQPVQQPVQPAPQPQQVQPSAPPVQPPQQQPAPPSQAPQPVAQPAPPPSAQTFQPAEPVVEAEPIVEEAPVVEKPQRKEAVIIMNVAAHHGSELNGEVLLNSIQQSGFKFGDMNIFHRHLSPDGSGPALFSLANMVNPGTFDPEMTDFTTPGVTIFMQVPSYGDALQNFKLMLQSAQHIADEVGGVVLDDQRRMMTPQKLREYQDRIREVMDANA</sequence>
<name>ZIPA_SALCH</name>
<reference key="1">
    <citation type="journal article" date="2005" name="Nucleic Acids Res.">
        <title>The genome sequence of Salmonella enterica serovar Choleraesuis, a highly invasive and resistant zoonotic pathogen.</title>
        <authorList>
            <person name="Chiu C.-H."/>
            <person name="Tang P."/>
            <person name="Chu C."/>
            <person name="Hu S."/>
            <person name="Bao Q."/>
            <person name="Yu J."/>
            <person name="Chou Y.-Y."/>
            <person name="Wang H.-S."/>
            <person name="Lee Y.-S."/>
        </authorList>
    </citation>
    <scope>NUCLEOTIDE SEQUENCE [LARGE SCALE GENOMIC DNA]</scope>
    <source>
        <strain>SC-B67</strain>
    </source>
</reference>
<dbReference type="EMBL" id="AE017220">
    <property type="protein sequence ID" value="AAX66332.1"/>
    <property type="status" value="ALT_INIT"/>
    <property type="molecule type" value="Genomic_DNA"/>
</dbReference>
<dbReference type="RefSeq" id="WP_023235118.1">
    <property type="nucleotide sequence ID" value="NC_006905.1"/>
</dbReference>
<dbReference type="SMR" id="Q57LT0"/>
<dbReference type="KEGG" id="sec:SCH_2426"/>
<dbReference type="HOGENOM" id="CLU_030174_1_0_6"/>
<dbReference type="Proteomes" id="UP000000538">
    <property type="component" value="Chromosome"/>
</dbReference>
<dbReference type="GO" id="GO:0032153">
    <property type="term" value="C:cell division site"/>
    <property type="evidence" value="ECO:0007669"/>
    <property type="project" value="UniProtKB-UniRule"/>
</dbReference>
<dbReference type="GO" id="GO:0005886">
    <property type="term" value="C:plasma membrane"/>
    <property type="evidence" value="ECO:0007669"/>
    <property type="project" value="UniProtKB-SubCell"/>
</dbReference>
<dbReference type="GO" id="GO:0000917">
    <property type="term" value="P:division septum assembly"/>
    <property type="evidence" value="ECO:0007669"/>
    <property type="project" value="TreeGrafter"/>
</dbReference>
<dbReference type="GO" id="GO:0043093">
    <property type="term" value="P:FtsZ-dependent cytokinesis"/>
    <property type="evidence" value="ECO:0007669"/>
    <property type="project" value="UniProtKB-UniRule"/>
</dbReference>
<dbReference type="CDD" id="cd00231">
    <property type="entry name" value="ZipA"/>
    <property type="match status" value="1"/>
</dbReference>
<dbReference type="FunFam" id="3.30.1400.10:FF:000001">
    <property type="entry name" value="Cell division protein ZipA"/>
    <property type="match status" value="1"/>
</dbReference>
<dbReference type="Gene3D" id="3.30.1400.10">
    <property type="entry name" value="ZipA, C-terminal FtsZ-binding domain"/>
    <property type="match status" value="1"/>
</dbReference>
<dbReference type="HAMAP" id="MF_00509">
    <property type="entry name" value="ZipA"/>
    <property type="match status" value="1"/>
</dbReference>
<dbReference type="InterPro" id="IPR011919">
    <property type="entry name" value="Cell_div_ZipA"/>
</dbReference>
<dbReference type="InterPro" id="IPR007449">
    <property type="entry name" value="ZipA_FtsZ-bd_C"/>
</dbReference>
<dbReference type="InterPro" id="IPR036765">
    <property type="entry name" value="ZipA_FtsZ-bd_C_sf"/>
</dbReference>
<dbReference type="NCBIfam" id="TIGR02205">
    <property type="entry name" value="septum_zipA"/>
    <property type="match status" value="1"/>
</dbReference>
<dbReference type="PANTHER" id="PTHR38685">
    <property type="entry name" value="CELL DIVISION PROTEIN ZIPA"/>
    <property type="match status" value="1"/>
</dbReference>
<dbReference type="PANTHER" id="PTHR38685:SF1">
    <property type="entry name" value="CELL DIVISION PROTEIN ZIPA"/>
    <property type="match status" value="1"/>
</dbReference>
<dbReference type="Pfam" id="PF04354">
    <property type="entry name" value="ZipA_C"/>
    <property type="match status" value="1"/>
</dbReference>
<dbReference type="SMART" id="SM00771">
    <property type="entry name" value="ZipA_C"/>
    <property type="match status" value="1"/>
</dbReference>
<dbReference type="SUPFAM" id="SSF64383">
    <property type="entry name" value="Cell-division protein ZipA, C-terminal domain"/>
    <property type="match status" value="1"/>
</dbReference>